<evidence type="ECO:0000255" key="1">
    <source>
        <dbReference type="HAMAP-Rule" id="MF_00165"/>
    </source>
</evidence>
<accession>Q3ZXD8</accession>
<gene>
    <name evidence="1" type="primary">tmk</name>
    <name type="ordered locus">cbdbA752</name>
</gene>
<proteinExistence type="inferred from homology"/>
<protein>
    <recommendedName>
        <fullName evidence="1">Thymidylate kinase</fullName>
        <ecNumber evidence="1">2.7.4.9</ecNumber>
    </recommendedName>
    <alternativeName>
        <fullName evidence="1">dTMP kinase</fullName>
    </alternativeName>
</protein>
<dbReference type="EC" id="2.7.4.9" evidence="1"/>
<dbReference type="EMBL" id="AJ965256">
    <property type="protein sequence ID" value="CAI82911.1"/>
    <property type="molecule type" value="Genomic_DNA"/>
</dbReference>
<dbReference type="RefSeq" id="WP_011309262.1">
    <property type="nucleotide sequence ID" value="NC_007356.1"/>
</dbReference>
<dbReference type="SMR" id="Q3ZXD8"/>
<dbReference type="KEGG" id="deh:cbdbA752"/>
<dbReference type="HOGENOM" id="CLU_049131_0_2_0"/>
<dbReference type="Proteomes" id="UP000000433">
    <property type="component" value="Chromosome"/>
</dbReference>
<dbReference type="GO" id="GO:0005829">
    <property type="term" value="C:cytosol"/>
    <property type="evidence" value="ECO:0007669"/>
    <property type="project" value="TreeGrafter"/>
</dbReference>
<dbReference type="GO" id="GO:0005524">
    <property type="term" value="F:ATP binding"/>
    <property type="evidence" value="ECO:0007669"/>
    <property type="project" value="UniProtKB-UniRule"/>
</dbReference>
<dbReference type="GO" id="GO:0004798">
    <property type="term" value="F:dTMP kinase activity"/>
    <property type="evidence" value="ECO:0007669"/>
    <property type="project" value="UniProtKB-UniRule"/>
</dbReference>
<dbReference type="GO" id="GO:0006233">
    <property type="term" value="P:dTDP biosynthetic process"/>
    <property type="evidence" value="ECO:0007669"/>
    <property type="project" value="InterPro"/>
</dbReference>
<dbReference type="GO" id="GO:0006235">
    <property type="term" value="P:dTTP biosynthetic process"/>
    <property type="evidence" value="ECO:0007669"/>
    <property type="project" value="UniProtKB-UniRule"/>
</dbReference>
<dbReference type="GO" id="GO:0006227">
    <property type="term" value="P:dUDP biosynthetic process"/>
    <property type="evidence" value="ECO:0007669"/>
    <property type="project" value="TreeGrafter"/>
</dbReference>
<dbReference type="CDD" id="cd01672">
    <property type="entry name" value="TMPK"/>
    <property type="match status" value="1"/>
</dbReference>
<dbReference type="FunFam" id="3.40.50.300:FF:000225">
    <property type="entry name" value="Thymidylate kinase"/>
    <property type="match status" value="1"/>
</dbReference>
<dbReference type="Gene3D" id="3.40.50.300">
    <property type="entry name" value="P-loop containing nucleotide triphosphate hydrolases"/>
    <property type="match status" value="1"/>
</dbReference>
<dbReference type="HAMAP" id="MF_00165">
    <property type="entry name" value="Thymidylate_kinase"/>
    <property type="match status" value="1"/>
</dbReference>
<dbReference type="InterPro" id="IPR027417">
    <property type="entry name" value="P-loop_NTPase"/>
</dbReference>
<dbReference type="InterPro" id="IPR039430">
    <property type="entry name" value="Thymidylate_kin-like_dom"/>
</dbReference>
<dbReference type="InterPro" id="IPR018095">
    <property type="entry name" value="Thymidylate_kin_CS"/>
</dbReference>
<dbReference type="InterPro" id="IPR018094">
    <property type="entry name" value="Thymidylate_kinase"/>
</dbReference>
<dbReference type="NCBIfam" id="TIGR00041">
    <property type="entry name" value="DTMP_kinase"/>
    <property type="match status" value="1"/>
</dbReference>
<dbReference type="PANTHER" id="PTHR10344">
    <property type="entry name" value="THYMIDYLATE KINASE"/>
    <property type="match status" value="1"/>
</dbReference>
<dbReference type="PANTHER" id="PTHR10344:SF4">
    <property type="entry name" value="UMP-CMP KINASE 2, MITOCHONDRIAL"/>
    <property type="match status" value="1"/>
</dbReference>
<dbReference type="Pfam" id="PF02223">
    <property type="entry name" value="Thymidylate_kin"/>
    <property type="match status" value="1"/>
</dbReference>
<dbReference type="SUPFAM" id="SSF52540">
    <property type="entry name" value="P-loop containing nucleoside triphosphate hydrolases"/>
    <property type="match status" value="1"/>
</dbReference>
<dbReference type="PROSITE" id="PS01331">
    <property type="entry name" value="THYMIDYLATE_KINASE"/>
    <property type="match status" value="1"/>
</dbReference>
<feature type="chain" id="PRO_1000023183" description="Thymidylate kinase">
    <location>
        <begin position="1"/>
        <end position="208"/>
    </location>
</feature>
<feature type="binding site" evidence="1">
    <location>
        <begin position="9"/>
        <end position="16"/>
    </location>
    <ligand>
        <name>ATP</name>
        <dbReference type="ChEBI" id="CHEBI:30616"/>
    </ligand>
</feature>
<sequence length="208" mass="23098">MSLFITFEGGEGCGKSTQSKALYRYLKKLGLGCVLTHEPGGSKSGDKITRLLKWSKEEHISPLTELLLFNASRSILIDNVIKPALQDGKIVICDRYTDSTLAYQGYGRGLDLDTVKCVNSLASGGLVPDLTIWLDMDDKAALLRKGELPPDRFESENNGFHQRVRNGFGAIYATEPDRFLKLDASLPQSEIFSRIKQRVTILLGCRNE</sequence>
<organism>
    <name type="scientific">Dehalococcoides mccartyi (strain CBDB1)</name>
    <dbReference type="NCBI Taxonomy" id="255470"/>
    <lineage>
        <taxon>Bacteria</taxon>
        <taxon>Bacillati</taxon>
        <taxon>Chloroflexota</taxon>
        <taxon>Dehalococcoidia</taxon>
        <taxon>Dehalococcoidales</taxon>
        <taxon>Dehalococcoidaceae</taxon>
        <taxon>Dehalococcoides</taxon>
    </lineage>
</organism>
<comment type="function">
    <text evidence="1">Phosphorylation of dTMP to form dTDP in both de novo and salvage pathways of dTTP synthesis.</text>
</comment>
<comment type="catalytic activity">
    <reaction evidence="1">
        <text>dTMP + ATP = dTDP + ADP</text>
        <dbReference type="Rhea" id="RHEA:13517"/>
        <dbReference type="ChEBI" id="CHEBI:30616"/>
        <dbReference type="ChEBI" id="CHEBI:58369"/>
        <dbReference type="ChEBI" id="CHEBI:63528"/>
        <dbReference type="ChEBI" id="CHEBI:456216"/>
        <dbReference type="EC" id="2.7.4.9"/>
    </reaction>
</comment>
<comment type="similarity">
    <text evidence="1">Belongs to the thymidylate kinase family.</text>
</comment>
<name>KTHY_DEHMC</name>
<keyword id="KW-0067">ATP-binding</keyword>
<keyword id="KW-0418">Kinase</keyword>
<keyword id="KW-0545">Nucleotide biosynthesis</keyword>
<keyword id="KW-0547">Nucleotide-binding</keyword>
<keyword id="KW-0808">Transferase</keyword>
<reference key="1">
    <citation type="journal article" date="2005" name="Nat. Biotechnol.">
        <title>Genome sequence of the chlorinated compound-respiring bacterium Dehalococcoides species strain CBDB1.</title>
        <authorList>
            <person name="Kube M."/>
            <person name="Beck A."/>
            <person name="Zinder S.H."/>
            <person name="Kuhl H."/>
            <person name="Reinhardt R."/>
            <person name="Adrian L."/>
        </authorList>
    </citation>
    <scope>NUCLEOTIDE SEQUENCE [LARGE SCALE GENOMIC DNA]</scope>
    <source>
        <strain>CBDB1</strain>
    </source>
</reference>